<organism>
    <name type="scientific">Shigella dysenteriae serotype 1 (strain Sd197)</name>
    <dbReference type="NCBI Taxonomy" id="300267"/>
    <lineage>
        <taxon>Bacteria</taxon>
        <taxon>Pseudomonadati</taxon>
        <taxon>Pseudomonadota</taxon>
        <taxon>Gammaproteobacteria</taxon>
        <taxon>Enterobacterales</taxon>
        <taxon>Enterobacteriaceae</taxon>
        <taxon>Shigella</taxon>
    </lineage>
</organism>
<reference key="1">
    <citation type="journal article" date="2005" name="Nucleic Acids Res.">
        <title>Genome dynamics and diversity of Shigella species, the etiologic agents of bacillary dysentery.</title>
        <authorList>
            <person name="Yang F."/>
            <person name="Yang J."/>
            <person name="Zhang X."/>
            <person name="Chen L."/>
            <person name="Jiang Y."/>
            <person name="Yan Y."/>
            <person name="Tang X."/>
            <person name="Wang J."/>
            <person name="Xiong Z."/>
            <person name="Dong J."/>
            <person name="Xue Y."/>
            <person name="Zhu Y."/>
            <person name="Xu X."/>
            <person name="Sun L."/>
            <person name="Chen S."/>
            <person name="Nie H."/>
            <person name="Peng J."/>
            <person name="Xu J."/>
            <person name="Wang Y."/>
            <person name="Yuan Z."/>
            <person name="Wen Y."/>
            <person name="Yao Z."/>
            <person name="Shen Y."/>
            <person name="Qiang B."/>
            <person name="Hou Y."/>
            <person name="Yu J."/>
            <person name="Jin Q."/>
        </authorList>
    </citation>
    <scope>NUCLEOTIDE SEQUENCE [LARGE SCALE GENOMIC DNA]</scope>
    <source>
        <strain>Sd197</strain>
    </source>
</reference>
<accession>Q32IH8</accession>
<comment type="function">
    <text evidence="1">Catalyzes the condensation of iminoaspartate with dihydroxyacetone phosphate to form quinolinate.</text>
</comment>
<comment type="catalytic activity">
    <reaction evidence="1">
        <text>iminosuccinate + dihydroxyacetone phosphate = quinolinate + phosphate + 2 H2O + H(+)</text>
        <dbReference type="Rhea" id="RHEA:25888"/>
        <dbReference type="ChEBI" id="CHEBI:15377"/>
        <dbReference type="ChEBI" id="CHEBI:15378"/>
        <dbReference type="ChEBI" id="CHEBI:29959"/>
        <dbReference type="ChEBI" id="CHEBI:43474"/>
        <dbReference type="ChEBI" id="CHEBI:57642"/>
        <dbReference type="ChEBI" id="CHEBI:77875"/>
        <dbReference type="EC" id="2.5.1.72"/>
    </reaction>
    <physiologicalReaction direction="left-to-right" evidence="1">
        <dbReference type="Rhea" id="RHEA:25889"/>
    </physiologicalReaction>
</comment>
<comment type="cofactor">
    <cofactor evidence="1">
        <name>[4Fe-4S] cluster</name>
        <dbReference type="ChEBI" id="CHEBI:49883"/>
    </cofactor>
    <text evidence="1">Binds 1 [4Fe-4S] cluster per subunit.</text>
</comment>
<comment type="pathway">
    <text evidence="1">Cofactor biosynthesis; NAD(+) biosynthesis; quinolinate from iminoaspartate: step 1/1.</text>
</comment>
<comment type="subcellular location">
    <subcellularLocation>
        <location evidence="1">Cytoplasm</location>
    </subcellularLocation>
</comment>
<comment type="similarity">
    <text evidence="1">Belongs to the quinolinate synthase family. Type 1 subfamily.</text>
</comment>
<name>NADA_SHIDS</name>
<proteinExistence type="inferred from homology"/>
<protein>
    <recommendedName>
        <fullName evidence="1">Quinolinate synthase</fullName>
        <ecNumber evidence="1">2.5.1.72</ecNumber>
    </recommendedName>
</protein>
<dbReference type="EC" id="2.5.1.72" evidence="1"/>
<dbReference type="EMBL" id="CP000034">
    <property type="protein sequence ID" value="ABB60879.1"/>
    <property type="molecule type" value="Genomic_DNA"/>
</dbReference>
<dbReference type="RefSeq" id="WP_000115269.1">
    <property type="nucleotide sequence ID" value="NC_007606.1"/>
</dbReference>
<dbReference type="RefSeq" id="YP_402368.1">
    <property type="nucleotide sequence ID" value="NC_007606.1"/>
</dbReference>
<dbReference type="SMR" id="Q32IH8"/>
<dbReference type="STRING" id="300267.SDY_0694"/>
<dbReference type="EnsemblBacteria" id="ABB60879">
    <property type="protein sequence ID" value="ABB60879"/>
    <property type="gene ID" value="SDY_0694"/>
</dbReference>
<dbReference type="KEGG" id="sdy:SDY_0694"/>
<dbReference type="PATRIC" id="fig|300267.13.peg.805"/>
<dbReference type="HOGENOM" id="CLU_047382_1_0_6"/>
<dbReference type="UniPathway" id="UPA00253">
    <property type="reaction ID" value="UER00327"/>
</dbReference>
<dbReference type="Proteomes" id="UP000002716">
    <property type="component" value="Chromosome"/>
</dbReference>
<dbReference type="GO" id="GO:0005829">
    <property type="term" value="C:cytosol"/>
    <property type="evidence" value="ECO:0007669"/>
    <property type="project" value="TreeGrafter"/>
</dbReference>
<dbReference type="GO" id="GO:0051539">
    <property type="term" value="F:4 iron, 4 sulfur cluster binding"/>
    <property type="evidence" value="ECO:0007669"/>
    <property type="project" value="UniProtKB-KW"/>
</dbReference>
<dbReference type="GO" id="GO:0046872">
    <property type="term" value="F:metal ion binding"/>
    <property type="evidence" value="ECO:0007669"/>
    <property type="project" value="UniProtKB-KW"/>
</dbReference>
<dbReference type="GO" id="GO:0008987">
    <property type="term" value="F:quinolinate synthetase A activity"/>
    <property type="evidence" value="ECO:0007669"/>
    <property type="project" value="UniProtKB-UniRule"/>
</dbReference>
<dbReference type="GO" id="GO:0034628">
    <property type="term" value="P:'de novo' NAD biosynthetic process from L-aspartate"/>
    <property type="evidence" value="ECO:0007669"/>
    <property type="project" value="TreeGrafter"/>
</dbReference>
<dbReference type="FunFam" id="3.40.50.10800:FF:000003">
    <property type="entry name" value="Quinolinate synthase A"/>
    <property type="match status" value="1"/>
</dbReference>
<dbReference type="Gene3D" id="3.40.50.10800">
    <property type="entry name" value="NadA-like"/>
    <property type="match status" value="3"/>
</dbReference>
<dbReference type="HAMAP" id="MF_00567">
    <property type="entry name" value="NadA_type1"/>
    <property type="match status" value="1"/>
</dbReference>
<dbReference type="InterPro" id="IPR003473">
    <property type="entry name" value="NadA"/>
</dbReference>
<dbReference type="InterPro" id="IPR036094">
    <property type="entry name" value="NadA_sf"/>
</dbReference>
<dbReference type="InterPro" id="IPR023513">
    <property type="entry name" value="Quinolinate_synth_A_type1"/>
</dbReference>
<dbReference type="NCBIfam" id="TIGR00550">
    <property type="entry name" value="nadA"/>
    <property type="match status" value="1"/>
</dbReference>
<dbReference type="NCBIfam" id="NF006877">
    <property type="entry name" value="PRK09375.1-1"/>
    <property type="match status" value="1"/>
</dbReference>
<dbReference type="NCBIfam" id="NF006878">
    <property type="entry name" value="PRK09375.1-2"/>
    <property type="match status" value="1"/>
</dbReference>
<dbReference type="PANTHER" id="PTHR30573:SF0">
    <property type="entry name" value="QUINOLINATE SYNTHASE, CHLOROPLASTIC"/>
    <property type="match status" value="1"/>
</dbReference>
<dbReference type="PANTHER" id="PTHR30573">
    <property type="entry name" value="QUINOLINATE SYNTHETASE A"/>
    <property type="match status" value="1"/>
</dbReference>
<dbReference type="Pfam" id="PF02445">
    <property type="entry name" value="NadA"/>
    <property type="match status" value="1"/>
</dbReference>
<dbReference type="SUPFAM" id="SSF142754">
    <property type="entry name" value="NadA-like"/>
    <property type="match status" value="1"/>
</dbReference>
<gene>
    <name evidence="1" type="primary">nadA</name>
    <name type="ordered locus">SDY_0694</name>
</gene>
<evidence type="ECO:0000255" key="1">
    <source>
        <dbReference type="HAMAP-Rule" id="MF_00567"/>
    </source>
</evidence>
<feature type="chain" id="PRO_1000024974" description="Quinolinate synthase">
    <location>
        <begin position="1"/>
        <end position="347"/>
    </location>
</feature>
<feature type="binding site" evidence="1">
    <location>
        <position position="47"/>
    </location>
    <ligand>
        <name>iminosuccinate</name>
        <dbReference type="ChEBI" id="CHEBI:77875"/>
    </ligand>
</feature>
<feature type="binding site" evidence="1">
    <location>
        <position position="68"/>
    </location>
    <ligand>
        <name>iminosuccinate</name>
        <dbReference type="ChEBI" id="CHEBI:77875"/>
    </ligand>
</feature>
<feature type="binding site" evidence="1">
    <location>
        <position position="113"/>
    </location>
    <ligand>
        <name>[4Fe-4S] cluster</name>
        <dbReference type="ChEBI" id="CHEBI:49883"/>
    </ligand>
</feature>
<feature type="binding site" evidence="1">
    <location>
        <begin position="139"/>
        <end position="141"/>
    </location>
    <ligand>
        <name>iminosuccinate</name>
        <dbReference type="ChEBI" id="CHEBI:77875"/>
    </ligand>
</feature>
<feature type="binding site" evidence="1">
    <location>
        <position position="156"/>
    </location>
    <ligand>
        <name>iminosuccinate</name>
        <dbReference type="ChEBI" id="CHEBI:77875"/>
    </ligand>
</feature>
<feature type="binding site" evidence="1">
    <location>
        <position position="200"/>
    </location>
    <ligand>
        <name>[4Fe-4S] cluster</name>
        <dbReference type="ChEBI" id="CHEBI:49883"/>
    </ligand>
</feature>
<feature type="binding site" evidence="1">
    <location>
        <begin position="226"/>
        <end position="228"/>
    </location>
    <ligand>
        <name>iminosuccinate</name>
        <dbReference type="ChEBI" id="CHEBI:77875"/>
    </ligand>
</feature>
<feature type="binding site" evidence="1">
    <location>
        <position position="243"/>
    </location>
    <ligand>
        <name>iminosuccinate</name>
        <dbReference type="ChEBI" id="CHEBI:77875"/>
    </ligand>
</feature>
<feature type="binding site" evidence="1">
    <location>
        <position position="297"/>
    </location>
    <ligand>
        <name>[4Fe-4S] cluster</name>
        <dbReference type="ChEBI" id="CHEBI:49883"/>
    </ligand>
</feature>
<keyword id="KW-0004">4Fe-4S</keyword>
<keyword id="KW-0963">Cytoplasm</keyword>
<keyword id="KW-0408">Iron</keyword>
<keyword id="KW-0411">Iron-sulfur</keyword>
<keyword id="KW-0479">Metal-binding</keyword>
<keyword id="KW-0662">Pyridine nucleotide biosynthesis</keyword>
<keyword id="KW-1185">Reference proteome</keyword>
<keyword id="KW-0808">Transferase</keyword>
<sequence>MSVMFDPDTAIYPFPPKPTPLSIDEKAYYREKIKRLLKERNAVMVAHYYTDPEIQQLAEETGGCISDSLEMARFGAKHPASTLLVAGVRFMGETAKILSPEKTILMPTLQAECSLDLGCPVEEFNAFCDAHPDHTVVVYANTSAAVKARADWVVTSSIAVELIDHLDSLGEKIIWAPDKHLGRYVQKQTGADILCWQGACIVHDEFKTQALTRLQEEYLDAAILVHPESPQAIVDMADAVGSTSQLIAAAKTLPHQWLIVATDRGIFYKMQQAVPDKELLEAPTAGEGATCRSCAHCPWMAMNGLQAIAEALEQEGSNHEVHVDERLRERALVPLNRMLDFAATLRG</sequence>